<organism>
    <name type="scientific">Escherichia coli O139:H28 (strain E24377A / ETEC)</name>
    <dbReference type="NCBI Taxonomy" id="331111"/>
    <lineage>
        <taxon>Bacteria</taxon>
        <taxon>Pseudomonadati</taxon>
        <taxon>Pseudomonadota</taxon>
        <taxon>Gammaproteobacteria</taxon>
        <taxon>Enterobacterales</taxon>
        <taxon>Enterobacteriaceae</taxon>
        <taxon>Escherichia</taxon>
    </lineage>
</organism>
<feature type="chain" id="PRO_1000059310" description="Chorismate synthase">
    <location>
        <begin position="1"/>
        <end position="361"/>
    </location>
</feature>
<feature type="binding site" evidence="1">
    <location>
        <position position="48"/>
    </location>
    <ligand>
        <name>NADP(+)</name>
        <dbReference type="ChEBI" id="CHEBI:58349"/>
    </ligand>
</feature>
<feature type="binding site" evidence="1">
    <location>
        <position position="54"/>
    </location>
    <ligand>
        <name>NADP(+)</name>
        <dbReference type="ChEBI" id="CHEBI:58349"/>
    </ligand>
</feature>
<feature type="binding site" evidence="1">
    <location>
        <begin position="125"/>
        <end position="127"/>
    </location>
    <ligand>
        <name>FMN</name>
        <dbReference type="ChEBI" id="CHEBI:58210"/>
    </ligand>
</feature>
<feature type="binding site" evidence="1">
    <location>
        <begin position="238"/>
        <end position="239"/>
    </location>
    <ligand>
        <name>FMN</name>
        <dbReference type="ChEBI" id="CHEBI:58210"/>
    </ligand>
</feature>
<feature type="binding site" evidence="1">
    <location>
        <position position="278"/>
    </location>
    <ligand>
        <name>FMN</name>
        <dbReference type="ChEBI" id="CHEBI:58210"/>
    </ligand>
</feature>
<feature type="binding site" evidence="1">
    <location>
        <begin position="293"/>
        <end position="297"/>
    </location>
    <ligand>
        <name>FMN</name>
        <dbReference type="ChEBI" id="CHEBI:58210"/>
    </ligand>
</feature>
<feature type="binding site" evidence="1">
    <location>
        <position position="319"/>
    </location>
    <ligand>
        <name>FMN</name>
        <dbReference type="ChEBI" id="CHEBI:58210"/>
    </ligand>
</feature>
<accession>A7ZPE5</accession>
<reference key="1">
    <citation type="journal article" date="2008" name="J. Bacteriol.">
        <title>The pangenome structure of Escherichia coli: comparative genomic analysis of E. coli commensal and pathogenic isolates.</title>
        <authorList>
            <person name="Rasko D.A."/>
            <person name="Rosovitz M.J."/>
            <person name="Myers G.S.A."/>
            <person name="Mongodin E.F."/>
            <person name="Fricke W.F."/>
            <person name="Gajer P."/>
            <person name="Crabtree J."/>
            <person name="Sebaihia M."/>
            <person name="Thomson N.R."/>
            <person name="Chaudhuri R."/>
            <person name="Henderson I.R."/>
            <person name="Sperandio V."/>
            <person name="Ravel J."/>
        </authorList>
    </citation>
    <scope>NUCLEOTIDE SEQUENCE [LARGE SCALE GENOMIC DNA]</scope>
    <source>
        <strain>E24377A / ETEC</strain>
    </source>
</reference>
<name>AROC_ECO24</name>
<evidence type="ECO:0000255" key="1">
    <source>
        <dbReference type="HAMAP-Rule" id="MF_00300"/>
    </source>
</evidence>
<gene>
    <name evidence="1" type="primary">aroC</name>
    <name type="ordered locus">EcE24377A_2624</name>
</gene>
<keyword id="KW-0028">Amino-acid biosynthesis</keyword>
<keyword id="KW-0057">Aromatic amino acid biosynthesis</keyword>
<keyword id="KW-0274">FAD</keyword>
<keyword id="KW-0285">Flavoprotein</keyword>
<keyword id="KW-0288">FMN</keyword>
<keyword id="KW-0456">Lyase</keyword>
<keyword id="KW-0521">NADP</keyword>
<keyword id="KW-1185">Reference proteome</keyword>
<sequence length="361" mass="39174">MAGNTIGQLFRVTTFGESHGLALGCIVDGVPPGIPLTEADLQHDLDRRRPGTSRYTTQRREPDQVKILSGVFEGVTTGTSIGLLIENTDQRSQDYSAIKDVFRPGHADYTYEQKYGLRDYRGGGRSSARETAMRVAAGAIAKKYLAEKFGIEIRGCLTQMGDIPLEIKDWSQVEQNPFFCPDPDKIDALDELMRALKKEGDSIGAKVTVVASGVPAGLGEPVFDRLDADIAHALMSINAVKGVEIGDGFDVVALRGSQNRDEITKDGFQSNHAGGILGGISSGQQIIAHMALKPTSSITVPGRTINRFGEEVEMITKGRHDPCVGIRAVPIAEAMLAIVLMDHLLRQRAQNADVKTHIPRW</sequence>
<comment type="function">
    <text evidence="1">Catalyzes the anti-1,4-elimination of the C-3 phosphate and the C-6 proR hydrogen from 5-enolpyruvylshikimate-3-phosphate (EPSP) to yield chorismate, which is the branch point compound that serves as the starting substrate for the three terminal pathways of aromatic amino acid biosynthesis. This reaction introduces a second double bond into the aromatic ring system.</text>
</comment>
<comment type="catalytic activity">
    <reaction evidence="1">
        <text>5-O-(1-carboxyvinyl)-3-phosphoshikimate = chorismate + phosphate</text>
        <dbReference type="Rhea" id="RHEA:21020"/>
        <dbReference type="ChEBI" id="CHEBI:29748"/>
        <dbReference type="ChEBI" id="CHEBI:43474"/>
        <dbReference type="ChEBI" id="CHEBI:57701"/>
        <dbReference type="EC" id="4.2.3.5"/>
    </reaction>
</comment>
<comment type="cofactor">
    <cofactor evidence="1">
        <name>FMNH2</name>
        <dbReference type="ChEBI" id="CHEBI:57618"/>
    </cofactor>
    <text evidence="1">Reduced FMN (FMNH(2)).</text>
</comment>
<comment type="pathway">
    <text evidence="1">Metabolic intermediate biosynthesis; chorismate biosynthesis; chorismate from D-erythrose 4-phosphate and phosphoenolpyruvate: step 7/7.</text>
</comment>
<comment type="subunit">
    <text evidence="1">Homotetramer.</text>
</comment>
<comment type="similarity">
    <text evidence="1">Belongs to the chorismate synthase family.</text>
</comment>
<dbReference type="EC" id="4.2.3.5" evidence="1"/>
<dbReference type="EMBL" id="CP000800">
    <property type="protein sequence ID" value="ABV16835.1"/>
    <property type="molecule type" value="Genomic_DNA"/>
</dbReference>
<dbReference type="RefSeq" id="WP_012138873.1">
    <property type="nucleotide sequence ID" value="NC_009801.1"/>
</dbReference>
<dbReference type="SMR" id="A7ZPE5"/>
<dbReference type="KEGG" id="ecw:EcE24377A_2624"/>
<dbReference type="HOGENOM" id="CLU_034547_0_2_6"/>
<dbReference type="UniPathway" id="UPA00053">
    <property type="reaction ID" value="UER00090"/>
</dbReference>
<dbReference type="Proteomes" id="UP000001122">
    <property type="component" value="Chromosome"/>
</dbReference>
<dbReference type="GO" id="GO:0005829">
    <property type="term" value="C:cytosol"/>
    <property type="evidence" value="ECO:0007669"/>
    <property type="project" value="TreeGrafter"/>
</dbReference>
<dbReference type="GO" id="GO:0004107">
    <property type="term" value="F:chorismate synthase activity"/>
    <property type="evidence" value="ECO:0007669"/>
    <property type="project" value="UniProtKB-UniRule"/>
</dbReference>
<dbReference type="GO" id="GO:0010181">
    <property type="term" value="F:FMN binding"/>
    <property type="evidence" value="ECO:0007669"/>
    <property type="project" value="TreeGrafter"/>
</dbReference>
<dbReference type="GO" id="GO:0008652">
    <property type="term" value="P:amino acid biosynthetic process"/>
    <property type="evidence" value="ECO:0007669"/>
    <property type="project" value="UniProtKB-KW"/>
</dbReference>
<dbReference type="GO" id="GO:0009073">
    <property type="term" value="P:aromatic amino acid family biosynthetic process"/>
    <property type="evidence" value="ECO:0007669"/>
    <property type="project" value="UniProtKB-KW"/>
</dbReference>
<dbReference type="GO" id="GO:0009423">
    <property type="term" value="P:chorismate biosynthetic process"/>
    <property type="evidence" value="ECO:0007669"/>
    <property type="project" value="UniProtKB-UniRule"/>
</dbReference>
<dbReference type="CDD" id="cd07304">
    <property type="entry name" value="Chorismate_synthase"/>
    <property type="match status" value="1"/>
</dbReference>
<dbReference type="FunFam" id="3.60.150.10:FF:000001">
    <property type="entry name" value="Chorismate synthase"/>
    <property type="match status" value="1"/>
</dbReference>
<dbReference type="Gene3D" id="3.60.150.10">
    <property type="entry name" value="Chorismate synthase AroC"/>
    <property type="match status" value="1"/>
</dbReference>
<dbReference type="HAMAP" id="MF_00300">
    <property type="entry name" value="Chorismate_synth"/>
    <property type="match status" value="1"/>
</dbReference>
<dbReference type="InterPro" id="IPR000453">
    <property type="entry name" value="Chorismate_synth"/>
</dbReference>
<dbReference type="InterPro" id="IPR035904">
    <property type="entry name" value="Chorismate_synth_AroC_sf"/>
</dbReference>
<dbReference type="InterPro" id="IPR020541">
    <property type="entry name" value="Chorismate_synthase_CS"/>
</dbReference>
<dbReference type="NCBIfam" id="TIGR00033">
    <property type="entry name" value="aroC"/>
    <property type="match status" value="1"/>
</dbReference>
<dbReference type="NCBIfam" id="NF003793">
    <property type="entry name" value="PRK05382.1"/>
    <property type="match status" value="1"/>
</dbReference>
<dbReference type="PANTHER" id="PTHR21085">
    <property type="entry name" value="CHORISMATE SYNTHASE"/>
    <property type="match status" value="1"/>
</dbReference>
<dbReference type="PANTHER" id="PTHR21085:SF0">
    <property type="entry name" value="CHORISMATE SYNTHASE"/>
    <property type="match status" value="1"/>
</dbReference>
<dbReference type="Pfam" id="PF01264">
    <property type="entry name" value="Chorismate_synt"/>
    <property type="match status" value="1"/>
</dbReference>
<dbReference type="PIRSF" id="PIRSF001456">
    <property type="entry name" value="Chorismate_synth"/>
    <property type="match status" value="1"/>
</dbReference>
<dbReference type="SUPFAM" id="SSF103263">
    <property type="entry name" value="Chorismate synthase, AroC"/>
    <property type="match status" value="1"/>
</dbReference>
<dbReference type="PROSITE" id="PS00787">
    <property type="entry name" value="CHORISMATE_SYNTHASE_1"/>
    <property type="match status" value="1"/>
</dbReference>
<dbReference type="PROSITE" id="PS00788">
    <property type="entry name" value="CHORISMATE_SYNTHASE_2"/>
    <property type="match status" value="1"/>
</dbReference>
<dbReference type="PROSITE" id="PS00789">
    <property type="entry name" value="CHORISMATE_SYNTHASE_3"/>
    <property type="match status" value="1"/>
</dbReference>
<proteinExistence type="inferred from homology"/>
<protein>
    <recommendedName>
        <fullName evidence="1">Chorismate synthase</fullName>
        <shortName evidence="1">CS</shortName>
        <ecNumber evidence="1">4.2.3.5</ecNumber>
    </recommendedName>
    <alternativeName>
        <fullName evidence="1">5-enolpyruvylshikimate-3-phosphate phospholyase</fullName>
    </alternativeName>
</protein>